<evidence type="ECO:0000250" key="1"/>
<evidence type="ECO:0000305" key="2"/>
<organism>
    <name type="scientific">Schizosaccharomyces pombe (strain 972 / ATCC 24843)</name>
    <name type="common">Fission yeast</name>
    <dbReference type="NCBI Taxonomy" id="284812"/>
    <lineage>
        <taxon>Eukaryota</taxon>
        <taxon>Fungi</taxon>
        <taxon>Dikarya</taxon>
        <taxon>Ascomycota</taxon>
        <taxon>Taphrinomycotina</taxon>
        <taxon>Schizosaccharomycetes</taxon>
        <taxon>Schizosaccharomycetales</taxon>
        <taxon>Schizosaccharomycetaceae</taxon>
        <taxon>Schizosaccharomyces</taxon>
    </lineage>
</organism>
<reference key="1">
    <citation type="journal article" date="2002" name="Nature">
        <title>The genome sequence of Schizosaccharomyces pombe.</title>
        <authorList>
            <person name="Wood V."/>
            <person name="Gwilliam R."/>
            <person name="Rajandream M.A."/>
            <person name="Lyne M.H."/>
            <person name="Lyne R."/>
            <person name="Stewart A."/>
            <person name="Sgouros J.G."/>
            <person name="Peat N."/>
            <person name="Hayles J."/>
            <person name="Baker S.G."/>
            <person name="Basham D."/>
            <person name="Bowman S."/>
            <person name="Brooks K."/>
            <person name="Brown D."/>
            <person name="Brown S."/>
            <person name="Chillingworth T."/>
            <person name="Churcher C.M."/>
            <person name="Collins M."/>
            <person name="Connor R."/>
            <person name="Cronin A."/>
            <person name="Davis P."/>
            <person name="Feltwell T."/>
            <person name="Fraser A."/>
            <person name="Gentles S."/>
            <person name="Goble A."/>
            <person name="Hamlin N."/>
            <person name="Harris D.E."/>
            <person name="Hidalgo J."/>
            <person name="Hodgson G."/>
            <person name="Holroyd S."/>
            <person name="Hornsby T."/>
            <person name="Howarth S."/>
            <person name="Huckle E.J."/>
            <person name="Hunt S."/>
            <person name="Jagels K."/>
            <person name="James K.D."/>
            <person name="Jones L."/>
            <person name="Jones M."/>
            <person name="Leather S."/>
            <person name="McDonald S."/>
            <person name="McLean J."/>
            <person name="Mooney P."/>
            <person name="Moule S."/>
            <person name="Mungall K.L."/>
            <person name="Murphy L.D."/>
            <person name="Niblett D."/>
            <person name="Odell C."/>
            <person name="Oliver K."/>
            <person name="O'Neil S."/>
            <person name="Pearson D."/>
            <person name="Quail M.A."/>
            <person name="Rabbinowitsch E."/>
            <person name="Rutherford K.M."/>
            <person name="Rutter S."/>
            <person name="Saunders D."/>
            <person name="Seeger K."/>
            <person name="Sharp S."/>
            <person name="Skelton J."/>
            <person name="Simmonds M.N."/>
            <person name="Squares R."/>
            <person name="Squares S."/>
            <person name="Stevens K."/>
            <person name="Taylor K."/>
            <person name="Taylor R.G."/>
            <person name="Tivey A."/>
            <person name="Walsh S.V."/>
            <person name="Warren T."/>
            <person name="Whitehead S."/>
            <person name="Woodward J.R."/>
            <person name="Volckaert G."/>
            <person name="Aert R."/>
            <person name="Robben J."/>
            <person name="Grymonprez B."/>
            <person name="Weltjens I."/>
            <person name="Vanstreels E."/>
            <person name="Rieger M."/>
            <person name="Schaefer M."/>
            <person name="Mueller-Auer S."/>
            <person name="Gabel C."/>
            <person name="Fuchs M."/>
            <person name="Duesterhoeft A."/>
            <person name="Fritzc C."/>
            <person name="Holzer E."/>
            <person name="Moestl D."/>
            <person name="Hilbert H."/>
            <person name="Borzym K."/>
            <person name="Langer I."/>
            <person name="Beck A."/>
            <person name="Lehrach H."/>
            <person name="Reinhardt R."/>
            <person name="Pohl T.M."/>
            <person name="Eger P."/>
            <person name="Zimmermann W."/>
            <person name="Wedler H."/>
            <person name="Wambutt R."/>
            <person name="Purnelle B."/>
            <person name="Goffeau A."/>
            <person name="Cadieu E."/>
            <person name="Dreano S."/>
            <person name="Gloux S."/>
            <person name="Lelaure V."/>
            <person name="Mottier S."/>
            <person name="Galibert F."/>
            <person name="Aves S.J."/>
            <person name="Xiang Z."/>
            <person name="Hunt C."/>
            <person name="Moore K."/>
            <person name="Hurst S.M."/>
            <person name="Lucas M."/>
            <person name="Rochet M."/>
            <person name="Gaillardin C."/>
            <person name="Tallada V.A."/>
            <person name="Garzon A."/>
            <person name="Thode G."/>
            <person name="Daga R.R."/>
            <person name="Cruzado L."/>
            <person name="Jimenez J."/>
            <person name="Sanchez M."/>
            <person name="del Rey F."/>
            <person name="Benito J."/>
            <person name="Dominguez A."/>
            <person name="Revuelta J.L."/>
            <person name="Moreno S."/>
            <person name="Armstrong J."/>
            <person name="Forsburg S.L."/>
            <person name="Cerutti L."/>
            <person name="Lowe T."/>
            <person name="McCombie W.R."/>
            <person name="Paulsen I."/>
            <person name="Potashkin J."/>
            <person name="Shpakovski G.V."/>
            <person name="Ussery D."/>
            <person name="Barrell B.G."/>
            <person name="Nurse P."/>
        </authorList>
    </citation>
    <scope>NUCLEOTIDE SEQUENCE [LARGE SCALE GENOMIC DNA]</scope>
    <source>
        <strain>972 / ATCC 24843</strain>
    </source>
</reference>
<sequence>MSLEENVKEAKNAFNILQTLSVEDRDDALDKIVEELRIKKSEVLAANAEDMKAAKLLAESGKLSSSMVKRLDLSSSDKYDSMVQGVLDVKSLPDPLGRVTYARSLDDGLDLYKVSCPVGLLLVIFEARPEVIINITSLAIKSGNAVVLKGGTESAKSFAALSNVVRSALGKSKVPQAAVQLVQSREEVSQLLKLDEYIDLVIPRGSTNLVRHIKDNTKIPVLGHAAGLCSMYVHEDADMELASKLVLDGKTDYPAACNAIETLLINEAVLSSHLPKIAETLTEAKVTLKCDPASLKVLKDMPKVSALVEPSVDQDYNTEFSDLILAIKTVPSLQSAMQHINTHGSKHTDCIITSSEAAANRFMAGIDASGVYWNASTRFADGFRYGYGTEVGISTNKIHARGPMGLDGLTIYKYQLRGNGQVASSYGVGPGKRAFKHTPINIDNISQVSKK</sequence>
<feature type="chain" id="PRO_0000189823" description="Probable gamma-glutamyl phosphate reductase">
    <location>
        <begin position="1"/>
        <end position="451"/>
    </location>
</feature>
<proteinExistence type="inferred from homology"/>
<gene>
    <name type="primary">pro1</name>
    <name type="ORF">SPAC821.11</name>
</gene>
<name>PROA_SCHPO</name>
<dbReference type="EC" id="1.2.1.41"/>
<dbReference type="EMBL" id="CU329670">
    <property type="protein sequence ID" value="CAB57445.1"/>
    <property type="molecule type" value="Genomic_DNA"/>
</dbReference>
<dbReference type="PIR" id="T41722">
    <property type="entry name" value="T41722"/>
</dbReference>
<dbReference type="RefSeq" id="NP_593164.1">
    <property type="nucleotide sequence ID" value="NM_001018562.2"/>
</dbReference>
<dbReference type="SMR" id="Q9UT44"/>
<dbReference type="BioGRID" id="279832">
    <property type="interactions" value="4"/>
</dbReference>
<dbReference type="FunCoup" id="Q9UT44">
    <property type="interactions" value="296"/>
</dbReference>
<dbReference type="STRING" id="284812.Q9UT44"/>
<dbReference type="iPTMnet" id="Q9UT44"/>
<dbReference type="PaxDb" id="4896-SPAC821.11.1"/>
<dbReference type="EnsemblFungi" id="SPAC821.11.1">
    <property type="protein sequence ID" value="SPAC821.11.1:pep"/>
    <property type="gene ID" value="SPAC821.11"/>
</dbReference>
<dbReference type="GeneID" id="2543410"/>
<dbReference type="KEGG" id="spo:2543410"/>
<dbReference type="PomBase" id="SPAC821.11">
    <property type="gene designation" value="pro1"/>
</dbReference>
<dbReference type="VEuPathDB" id="FungiDB:SPAC821.11"/>
<dbReference type="eggNOG" id="KOG4165">
    <property type="taxonomic scope" value="Eukaryota"/>
</dbReference>
<dbReference type="HOGENOM" id="CLU_030231_0_1_1"/>
<dbReference type="InParanoid" id="Q9UT44"/>
<dbReference type="OMA" id="KTQRYGT"/>
<dbReference type="PhylomeDB" id="Q9UT44"/>
<dbReference type="Reactome" id="R-SPO-8964539">
    <property type="pathway name" value="Glutamate and glutamine metabolism"/>
</dbReference>
<dbReference type="Reactome" id="R-SPO-9837999">
    <property type="pathway name" value="Mitochondrial protein degradation"/>
</dbReference>
<dbReference type="UniPathway" id="UPA00098">
    <property type="reaction ID" value="UER00360"/>
</dbReference>
<dbReference type="PRO" id="PR:Q9UT44"/>
<dbReference type="Proteomes" id="UP000002485">
    <property type="component" value="Chromosome I"/>
</dbReference>
<dbReference type="GO" id="GO:0005829">
    <property type="term" value="C:cytosol"/>
    <property type="evidence" value="ECO:0007005"/>
    <property type="project" value="PomBase"/>
</dbReference>
<dbReference type="GO" id="GO:0005634">
    <property type="term" value="C:nucleus"/>
    <property type="evidence" value="ECO:0007005"/>
    <property type="project" value="PomBase"/>
</dbReference>
<dbReference type="GO" id="GO:0004350">
    <property type="term" value="F:glutamate-5-semialdehyde dehydrogenase activity"/>
    <property type="evidence" value="ECO:0000318"/>
    <property type="project" value="GO_Central"/>
</dbReference>
<dbReference type="GO" id="GO:0050661">
    <property type="term" value="F:NADP binding"/>
    <property type="evidence" value="ECO:0007669"/>
    <property type="project" value="InterPro"/>
</dbReference>
<dbReference type="GO" id="GO:0055129">
    <property type="term" value="P:L-proline biosynthetic process"/>
    <property type="evidence" value="ECO:0000269"/>
    <property type="project" value="PomBase"/>
</dbReference>
<dbReference type="CDD" id="cd07079">
    <property type="entry name" value="ALDH_F18-19_ProA-GPR"/>
    <property type="match status" value="1"/>
</dbReference>
<dbReference type="FunFam" id="3.40.309.10:FF:000006">
    <property type="entry name" value="Gamma-glutamyl phosphate reductase"/>
    <property type="match status" value="1"/>
</dbReference>
<dbReference type="Gene3D" id="3.40.605.10">
    <property type="entry name" value="Aldehyde Dehydrogenase, Chain A, domain 1"/>
    <property type="match status" value="1"/>
</dbReference>
<dbReference type="Gene3D" id="3.40.309.10">
    <property type="entry name" value="Aldehyde Dehydrogenase, Chain A, domain 2"/>
    <property type="match status" value="1"/>
</dbReference>
<dbReference type="HAMAP" id="MF_00412">
    <property type="entry name" value="ProA"/>
    <property type="match status" value="1"/>
</dbReference>
<dbReference type="InterPro" id="IPR016161">
    <property type="entry name" value="Ald_DH/histidinol_DH"/>
</dbReference>
<dbReference type="InterPro" id="IPR016163">
    <property type="entry name" value="Ald_DH_C"/>
</dbReference>
<dbReference type="InterPro" id="IPR016162">
    <property type="entry name" value="Ald_DH_N"/>
</dbReference>
<dbReference type="InterPro" id="IPR015590">
    <property type="entry name" value="Aldehyde_DH_dom"/>
</dbReference>
<dbReference type="InterPro" id="IPR020593">
    <property type="entry name" value="G-glutamylP_reductase_CS"/>
</dbReference>
<dbReference type="InterPro" id="IPR012134">
    <property type="entry name" value="Glu-5-SA_DH"/>
</dbReference>
<dbReference type="InterPro" id="IPR000965">
    <property type="entry name" value="GPR_dom"/>
</dbReference>
<dbReference type="NCBIfam" id="NF001221">
    <property type="entry name" value="PRK00197.1"/>
    <property type="match status" value="1"/>
</dbReference>
<dbReference type="NCBIfam" id="TIGR00407">
    <property type="entry name" value="proA"/>
    <property type="match status" value="1"/>
</dbReference>
<dbReference type="PANTHER" id="PTHR11063:SF8">
    <property type="entry name" value="DELTA-1-PYRROLINE-5-CARBOXYLATE SYNTHASE"/>
    <property type="match status" value="1"/>
</dbReference>
<dbReference type="PANTHER" id="PTHR11063">
    <property type="entry name" value="GLUTAMATE SEMIALDEHYDE DEHYDROGENASE"/>
    <property type="match status" value="1"/>
</dbReference>
<dbReference type="Pfam" id="PF00171">
    <property type="entry name" value="Aldedh"/>
    <property type="match status" value="1"/>
</dbReference>
<dbReference type="PIRSF" id="PIRSF000151">
    <property type="entry name" value="GPR"/>
    <property type="match status" value="1"/>
</dbReference>
<dbReference type="SUPFAM" id="SSF53720">
    <property type="entry name" value="ALDH-like"/>
    <property type="match status" value="1"/>
</dbReference>
<dbReference type="PROSITE" id="PS01223">
    <property type="entry name" value="PROA"/>
    <property type="match status" value="1"/>
</dbReference>
<comment type="function">
    <text evidence="1">Catalyzes the NADPH dependent reduction of L-gamma-glutamyl 5-phosphate into L-glutamate 5-semialdehyde and phosphate. The product spontaneously undergoes cyclization to form 1-pyrroline-5-carboxylate (By similarity).</text>
</comment>
<comment type="catalytic activity">
    <reaction>
        <text>L-glutamate 5-semialdehyde + phosphate + NADP(+) = L-glutamyl 5-phosphate + NADPH + H(+)</text>
        <dbReference type="Rhea" id="RHEA:19541"/>
        <dbReference type="ChEBI" id="CHEBI:15378"/>
        <dbReference type="ChEBI" id="CHEBI:43474"/>
        <dbReference type="ChEBI" id="CHEBI:57783"/>
        <dbReference type="ChEBI" id="CHEBI:58066"/>
        <dbReference type="ChEBI" id="CHEBI:58274"/>
        <dbReference type="ChEBI" id="CHEBI:58349"/>
        <dbReference type="EC" id="1.2.1.41"/>
    </reaction>
</comment>
<comment type="pathway">
    <text>Amino-acid biosynthesis; L-proline biosynthesis; L-glutamate 5-semialdehyde from L-glutamate: step 2/2.</text>
</comment>
<comment type="similarity">
    <text evidence="2">Belongs to the gamma-glutamyl phosphate reductase family.</text>
</comment>
<accession>Q9UT44</accession>
<keyword id="KW-0028">Amino-acid biosynthesis</keyword>
<keyword id="KW-0521">NADP</keyword>
<keyword id="KW-0560">Oxidoreductase</keyword>
<keyword id="KW-0641">Proline biosynthesis</keyword>
<keyword id="KW-1185">Reference proteome</keyword>
<protein>
    <recommendedName>
        <fullName>Probable gamma-glutamyl phosphate reductase</fullName>
        <shortName>GPR</shortName>
        <ecNumber>1.2.1.41</ecNumber>
    </recommendedName>
    <alternativeName>
        <fullName>Glutamate-5-semialdehyde dehydrogenase</fullName>
        <shortName>GSA dehydrogenase</shortName>
    </alternativeName>
    <alternativeName>
        <fullName>Glutamyl-gamma-semialdehyde dehydrogenase</fullName>
    </alternativeName>
</protein>